<organism>
    <name type="scientific">Drosophila yakuba</name>
    <name type="common">Fruit fly</name>
    <dbReference type="NCBI Taxonomy" id="7245"/>
    <lineage>
        <taxon>Eukaryota</taxon>
        <taxon>Metazoa</taxon>
        <taxon>Ecdysozoa</taxon>
        <taxon>Arthropoda</taxon>
        <taxon>Hexapoda</taxon>
        <taxon>Insecta</taxon>
        <taxon>Pterygota</taxon>
        <taxon>Neoptera</taxon>
        <taxon>Endopterygota</taxon>
        <taxon>Diptera</taxon>
        <taxon>Brachycera</taxon>
        <taxon>Muscomorpha</taxon>
        <taxon>Ephydroidea</taxon>
        <taxon>Drosophilidae</taxon>
        <taxon>Drosophila</taxon>
        <taxon>Sophophora</taxon>
    </lineage>
</organism>
<comment type="function">
    <text evidence="3">Methylates (mono- and asymmetric dimethylation) the guanidino nitrogens of arginyl residues in proteins. May methylate histone H3 at 'Arg-17' and activate transcription via chromatin remodeling (By similarity).</text>
</comment>
<comment type="catalytic activity">
    <reaction evidence="3">
        <text>L-arginyl-[protein] + 2 S-adenosyl-L-methionine = N(omega),N(omega)-dimethyl-L-arginyl-[protein] + 2 S-adenosyl-L-homocysteine + 2 H(+)</text>
        <dbReference type="Rhea" id="RHEA:48096"/>
        <dbReference type="Rhea" id="RHEA-COMP:10532"/>
        <dbReference type="Rhea" id="RHEA-COMP:11991"/>
        <dbReference type="ChEBI" id="CHEBI:15378"/>
        <dbReference type="ChEBI" id="CHEBI:29965"/>
        <dbReference type="ChEBI" id="CHEBI:57856"/>
        <dbReference type="ChEBI" id="CHEBI:59789"/>
        <dbReference type="ChEBI" id="CHEBI:61897"/>
        <dbReference type="EC" id="2.1.1.319"/>
    </reaction>
</comment>
<comment type="subunit">
    <text evidence="1">Homodimer.</text>
</comment>
<comment type="subcellular location">
    <subcellularLocation>
        <location evidence="4">Cytoplasm</location>
    </subcellularLocation>
    <subcellularLocation>
        <location evidence="4">Nucleus</location>
    </subcellularLocation>
</comment>
<comment type="PTM">
    <text evidence="1">The dimethylated protein is the major form.</text>
</comment>
<comment type="similarity">
    <text evidence="5">Belongs to the class I-like SAM-binding methyltransferase superfamily. Protein arginine N-methyltransferase family.</text>
</comment>
<feature type="chain" id="PRO_0000382231" description="Histone-arginine methyltransferase CARMER">
    <location>
        <begin position="1"/>
        <end position="530"/>
    </location>
</feature>
<feature type="domain" description="SAM-dependent MTase PRMT-type" evidence="5">
    <location>
        <begin position="141"/>
        <end position="450"/>
    </location>
</feature>
<feature type="binding site" evidence="2">
    <location>
        <position position="154"/>
    </location>
    <ligand>
        <name>S-adenosyl-L-methionine</name>
        <dbReference type="ChEBI" id="CHEBI:59789"/>
    </ligand>
</feature>
<feature type="binding site" evidence="2">
    <location>
        <position position="163"/>
    </location>
    <ligand>
        <name>S-adenosyl-L-methionine</name>
        <dbReference type="ChEBI" id="CHEBI:59789"/>
    </ligand>
</feature>
<feature type="binding site" evidence="2">
    <location>
        <position position="187"/>
    </location>
    <ligand>
        <name>S-adenosyl-L-methionine</name>
        <dbReference type="ChEBI" id="CHEBI:59789"/>
    </ligand>
</feature>
<feature type="binding site" evidence="2">
    <location>
        <position position="209"/>
    </location>
    <ligand>
        <name>S-adenosyl-L-methionine</name>
        <dbReference type="ChEBI" id="CHEBI:59789"/>
    </ligand>
</feature>
<feature type="binding site" evidence="2">
    <location>
        <position position="238"/>
    </location>
    <ligand>
        <name>S-adenosyl-L-methionine</name>
        <dbReference type="ChEBI" id="CHEBI:59789"/>
    </ligand>
</feature>
<feature type="binding site" evidence="1">
    <location>
        <position position="266"/>
    </location>
    <ligand>
        <name>S-adenosyl-L-methionine</name>
        <dbReference type="ChEBI" id="CHEBI:59789"/>
    </ligand>
</feature>
<feature type="modified residue" description="Asymmetric dimethylarginine; by autocatalysis" evidence="3">
    <location>
        <position position="501"/>
    </location>
</feature>
<protein>
    <recommendedName>
        <fullName evidence="3">Histone-arginine methyltransferase CARMER</fullName>
        <ecNumber evidence="3">2.1.1.319</ecNumber>
    </recommendedName>
</protein>
<reference evidence="6" key="1">
    <citation type="journal article" date="2007" name="Nature">
        <title>Evolution of genes and genomes on the Drosophila phylogeny.</title>
        <authorList>
            <consortium name="Drosophila 12 genomes consortium"/>
        </authorList>
    </citation>
    <scope>NUCLEOTIDE SEQUENCE [LARGE SCALE GENOMIC DNA]</scope>
    <source>
        <strain evidence="6">Tai18E2 / Tucson 14021-0261.01</strain>
    </source>
</reference>
<sequence length="530" mass="59646">MSSLRPEEARKLATAASVSPLSNCQFSGVVISSIADEQKLEFTNKYKGSCTLLCSYDSQGVVLRVVSDDDQSHVLKEYMIAADTDAAQMGRRSYAVSLDADNLVLRFASDQDQQLFRKVVENVKHLRPKSVFSQRTEESSASQYFQFYGYLSQQQNMMQDYVRTSTYQRAILGNAVDFQDKIVLDVGAGSGILSFFAVQAGAAKVYAIEASNMAQYAQQLVESNNVQHKISVIPGKIEEIELPEKVDVIISEPMGYMLYNERMLETYLHARKWLKPQGKMYPTHGDLHIAPFSDESLYSEQYNKANFWYQSAFHGVDLTTLHKEGMKEYFRQPIVDTFDIRICMAKSVRHVCDFLNDKEDDLHLISIPLEFQILQTGICHGLAFWFDVEFSGSSQNVWLSTSPTAPLTHWYQVRCLLPMPIFIKQGQTLTGRVLLEANRRQSYDVTIDLHIEGTLISSSNTLDLKNPYFRYTGAPVQAPPGTSTQSPSEQYWTQVDTQGSRNSSSMLNGGLSVNGIGDGMDITHGLMHPH</sequence>
<name>CARM1_DROYA</name>
<evidence type="ECO:0000250" key="1"/>
<evidence type="ECO:0000250" key="2">
    <source>
        <dbReference type="UniProtKB" id="Q63009"/>
    </source>
</evidence>
<evidence type="ECO:0000250" key="3">
    <source>
        <dbReference type="UniProtKB" id="Q7Q2B7"/>
    </source>
</evidence>
<evidence type="ECO:0000250" key="4">
    <source>
        <dbReference type="UniProtKB" id="Q9VH48"/>
    </source>
</evidence>
<evidence type="ECO:0000255" key="5">
    <source>
        <dbReference type="PROSITE-ProRule" id="PRU01015"/>
    </source>
</evidence>
<evidence type="ECO:0000312" key="6">
    <source>
        <dbReference type="EMBL" id="EDW96749.1"/>
    </source>
</evidence>
<proteinExistence type="inferred from homology"/>
<gene>
    <name type="primary">Art4</name>
    <name type="ORF">GE24716</name>
</gene>
<accession>B4PVH6</accession>
<keyword id="KW-0156">Chromatin regulator</keyword>
<keyword id="KW-0963">Cytoplasm</keyword>
<keyword id="KW-0488">Methylation</keyword>
<keyword id="KW-0489">Methyltransferase</keyword>
<keyword id="KW-0539">Nucleus</keyword>
<keyword id="KW-0949">S-adenosyl-L-methionine</keyword>
<keyword id="KW-0804">Transcription</keyword>
<keyword id="KW-0805">Transcription regulation</keyword>
<keyword id="KW-0808">Transferase</keyword>
<dbReference type="EC" id="2.1.1.319" evidence="3"/>
<dbReference type="EMBL" id="CM000160">
    <property type="protein sequence ID" value="EDW96749.1"/>
    <property type="molecule type" value="Genomic_DNA"/>
</dbReference>
<dbReference type="SMR" id="B4PVH6"/>
<dbReference type="EnsemblMetazoa" id="FBtr0271234">
    <property type="protein sequence ID" value="FBpp0269726"/>
    <property type="gene ID" value="FBgn0241821"/>
</dbReference>
<dbReference type="EnsemblMetazoa" id="XM_002097001.4">
    <property type="protein sequence ID" value="XP_002097037.1"/>
    <property type="gene ID" value="LOC6536456"/>
</dbReference>
<dbReference type="GeneID" id="6536456"/>
<dbReference type="KEGG" id="dya:Dyak_GE24716"/>
<dbReference type="CTD" id="420"/>
<dbReference type="eggNOG" id="KOG1500">
    <property type="taxonomic scope" value="Eukaryota"/>
</dbReference>
<dbReference type="HOGENOM" id="CLU_017375_0_1_1"/>
<dbReference type="OMA" id="GIGDGMD"/>
<dbReference type="OrthoDB" id="7848332at2759"/>
<dbReference type="PhylomeDB" id="B4PVH6"/>
<dbReference type="Proteomes" id="UP000002282">
    <property type="component" value="Chromosome 3R"/>
</dbReference>
<dbReference type="GO" id="GO:0005737">
    <property type="term" value="C:cytoplasm"/>
    <property type="evidence" value="ECO:0000250"/>
    <property type="project" value="UniProtKB"/>
</dbReference>
<dbReference type="GO" id="GO:0005829">
    <property type="term" value="C:cytosol"/>
    <property type="evidence" value="ECO:0007669"/>
    <property type="project" value="EnsemblMetazoa"/>
</dbReference>
<dbReference type="GO" id="GO:0035097">
    <property type="term" value="C:histone methyltransferase complex"/>
    <property type="evidence" value="ECO:0007669"/>
    <property type="project" value="EnsemblMetazoa"/>
</dbReference>
<dbReference type="GO" id="GO:0005634">
    <property type="term" value="C:nucleus"/>
    <property type="evidence" value="ECO:0000250"/>
    <property type="project" value="UniProtKB"/>
</dbReference>
<dbReference type="GO" id="GO:0035642">
    <property type="term" value="F:histone H3R17 methyltransferase activity"/>
    <property type="evidence" value="ECO:0000250"/>
    <property type="project" value="UniProtKB"/>
</dbReference>
<dbReference type="GO" id="GO:0070611">
    <property type="term" value="F:histone H3R2 methyltransferase activity"/>
    <property type="evidence" value="ECO:0000250"/>
    <property type="project" value="UniProtKB"/>
</dbReference>
<dbReference type="GO" id="GO:0140903">
    <property type="term" value="F:histone H3R26 methyltransferase activity"/>
    <property type="evidence" value="ECO:0000250"/>
    <property type="project" value="UniProtKB"/>
</dbReference>
<dbReference type="GO" id="GO:0035242">
    <property type="term" value="F:protein-arginine omega-N asymmetric methyltransferase activity"/>
    <property type="evidence" value="ECO:0000250"/>
    <property type="project" value="UniProtKB"/>
</dbReference>
<dbReference type="GO" id="GO:0035241">
    <property type="term" value="F:protein-arginine omega-N monomethyltransferase activity"/>
    <property type="evidence" value="ECO:0000250"/>
    <property type="project" value="UniProtKB"/>
</dbReference>
<dbReference type="GO" id="GO:0006338">
    <property type="term" value="P:chromatin remodeling"/>
    <property type="evidence" value="ECO:0000250"/>
    <property type="project" value="UniProtKB"/>
</dbReference>
<dbReference type="GO" id="GO:0019919">
    <property type="term" value="P:peptidyl-arginine methylation, to asymmetrical-dimethyl arginine"/>
    <property type="evidence" value="ECO:0000250"/>
    <property type="project" value="UniProtKB"/>
</dbReference>
<dbReference type="GO" id="GO:0120142">
    <property type="term" value="P:positive regulation of ecdysone receptor signaling pathway"/>
    <property type="evidence" value="ECO:0007669"/>
    <property type="project" value="EnsemblMetazoa"/>
</dbReference>
<dbReference type="GO" id="GO:0045944">
    <property type="term" value="P:positive regulation of transcription by RNA polymerase II"/>
    <property type="evidence" value="ECO:0007669"/>
    <property type="project" value="EnsemblMetazoa"/>
</dbReference>
<dbReference type="GO" id="GO:0006355">
    <property type="term" value="P:regulation of DNA-templated transcription"/>
    <property type="evidence" value="ECO:0000250"/>
    <property type="project" value="UniProtKB"/>
</dbReference>
<dbReference type="CDD" id="cd02440">
    <property type="entry name" value="AdoMet_MTases"/>
    <property type="match status" value="1"/>
</dbReference>
<dbReference type="FunFam" id="2.30.29.30:FF:000449">
    <property type="entry name" value="Histone-arginine methyltransferase CARMER"/>
    <property type="match status" value="1"/>
</dbReference>
<dbReference type="FunFam" id="2.70.160.11:FF:000002">
    <property type="entry name" value="Probable histone-arginine methyltransferase CARM1"/>
    <property type="match status" value="1"/>
</dbReference>
<dbReference type="FunFam" id="3.40.50.150:FF:000031">
    <property type="entry name" value="Putative Histone-arginine methyltransferase CARM1"/>
    <property type="match status" value="1"/>
</dbReference>
<dbReference type="Gene3D" id="2.70.160.11">
    <property type="entry name" value="Hnrnp arginine n-methyltransferase1"/>
    <property type="match status" value="1"/>
</dbReference>
<dbReference type="Gene3D" id="2.30.29.30">
    <property type="entry name" value="Pleckstrin-homology domain (PH domain)/Phosphotyrosine-binding domain (PTB)"/>
    <property type="match status" value="1"/>
</dbReference>
<dbReference type="Gene3D" id="3.40.50.150">
    <property type="entry name" value="Vaccinia Virus protein VP39"/>
    <property type="match status" value="1"/>
</dbReference>
<dbReference type="InterPro" id="IPR025799">
    <property type="entry name" value="Arg_MeTrfase"/>
</dbReference>
<dbReference type="InterPro" id="IPR011993">
    <property type="entry name" value="PH-like_dom_sf"/>
</dbReference>
<dbReference type="InterPro" id="IPR055135">
    <property type="entry name" value="PRMT_dom"/>
</dbReference>
<dbReference type="InterPro" id="IPR029063">
    <property type="entry name" value="SAM-dependent_MTases_sf"/>
</dbReference>
<dbReference type="PANTHER" id="PTHR11006:SF10">
    <property type="entry name" value="HISTONE-ARGININE METHYLTRANSFERASE CARMER-RELATED"/>
    <property type="match status" value="1"/>
</dbReference>
<dbReference type="PANTHER" id="PTHR11006">
    <property type="entry name" value="PROTEIN ARGININE N-METHYLTRANSFERASE"/>
    <property type="match status" value="1"/>
</dbReference>
<dbReference type="Pfam" id="PF06325">
    <property type="entry name" value="PrmA"/>
    <property type="match status" value="1"/>
</dbReference>
<dbReference type="Pfam" id="PF22528">
    <property type="entry name" value="PRMT_C"/>
    <property type="match status" value="1"/>
</dbReference>
<dbReference type="SUPFAM" id="SSF53335">
    <property type="entry name" value="S-adenosyl-L-methionine-dependent methyltransferases"/>
    <property type="match status" value="1"/>
</dbReference>
<dbReference type="PROSITE" id="PS51678">
    <property type="entry name" value="SAM_MT_PRMT"/>
    <property type="match status" value="1"/>
</dbReference>